<proteinExistence type="evidence at protein level"/>
<accession>B3EWS5</accession>
<accession>A0A4Y5UGJ3</accession>
<dbReference type="EMBL" id="MH754554">
    <property type="protein sequence ID" value="QDC23089.1"/>
    <property type="molecule type" value="mRNA"/>
</dbReference>
<dbReference type="EMBL" id="MH754555">
    <property type="protein sequence ID" value="QDC23090.1"/>
    <property type="molecule type" value="mRNA"/>
</dbReference>
<dbReference type="SMR" id="B3EWS5"/>
<dbReference type="GO" id="GO:0005576">
    <property type="term" value="C:extracellular region"/>
    <property type="evidence" value="ECO:0007669"/>
    <property type="project" value="UniProtKB-SubCell"/>
</dbReference>
<dbReference type="GO" id="GO:0016020">
    <property type="term" value="C:membrane"/>
    <property type="evidence" value="ECO:0007669"/>
    <property type="project" value="UniProtKB-KW"/>
</dbReference>
<dbReference type="GO" id="GO:0044218">
    <property type="term" value="C:other organism cell membrane"/>
    <property type="evidence" value="ECO:0007669"/>
    <property type="project" value="UniProtKB-KW"/>
</dbReference>
<dbReference type="GO" id="GO:0090729">
    <property type="term" value="F:toxin activity"/>
    <property type="evidence" value="ECO:0007669"/>
    <property type="project" value="UniProtKB-KW"/>
</dbReference>
<dbReference type="GO" id="GO:0031640">
    <property type="term" value="P:killing of cells of another organism"/>
    <property type="evidence" value="ECO:0007669"/>
    <property type="project" value="UniProtKB-KW"/>
</dbReference>
<dbReference type="InterPro" id="IPR019553">
    <property type="entry name" value="Spider_toxin_CSTX_knottin"/>
</dbReference>
<dbReference type="InterPro" id="IPR011142">
    <property type="entry name" value="Spider_toxin_CSTX_Knottin_CS"/>
</dbReference>
<dbReference type="Pfam" id="PF10530">
    <property type="entry name" value="Toxin_35"/>
    <property type="match status" value="1"/>
</dbReference>
<dbReference type="PROSITE" id="PS60029">
    <property type="entry name" value="SPIDER_CSTX"/>
    <property type="match status" value="1"/>
</dbReference>
<organism>
    <name type="scientific">Cupiennius salei</name>
    <name type="common">American wandering spider</name>
    <dbReference type="NCBI Taxonomy" id="6928"/>
    <lineage>
        <taxon>Eukaryota</taxon>
        <taxon>Metazoa</taxon>
        <taxon>Ecdysozoa</taxon>
        <taxon>Arthropoda</taxon>
        <taxon>Chelicerata</taxon>
        <taxon>Arachnida</taxon>
        <taxon>Araneae</taxon>
        <taxon>Araneomorphae</taxon>
        <taxon>Entelegynae</taxon>
        <taxon>Lycosoidea</taxon>
        <taxon>Ctenidae</taxon>
        <taxon>Cupiennius</taxon>
    </lineage>
</organism>
<name>TXC8_CUPSA</name>
<evidence type="ECO:0000250" key="1">
    <source>
        <dbReference type="UniProtKB" id="P58604"/>
    </source>
</evidence>
<evidence type="ECO:0000250" key="2">
    <source>
        <dbReference type="UniProtKB" id="P83919"/>
    </source>
</evidence>
<evidence type="ECO:0000255" key="3"/>
<evidence type="ECO:0000269" key="4">
    <source>
    </source>
</evidence>
<evidence type="ECO:0000303" key="5">
    <source>
    </source>
</evidence>
<evidence type="ECO:0000305" key="6">
    <source>
    </source>
</evidence>
<feature type="signal peptide" evidence="3">
    <location>
        <begin position="1"/>
        <end position="20"/>
    </location>
</feature>
<feature type="propeptide" id="PRO_0000452339" evidence="6">
    <location>
        <begin position="21"/>
        <end position="47"/>
    </location>
</feature>
<feature type="peptide" id="PRO_0000421198" description="CSTX-8 A chain" evidence="4">
    <location>
        <begin position="48"/>
        <end position="81"/>
    </location>
</feature>
<feature type="propeptide" id="PRO_0000452340" evidence="6">
    <location>
        <begin position="82"/>
        <end position="87"/>
    </location>
</feature>
<feature type="peptide" id="PRO_0000421199" description="CSTX-8 B chain" evidence="4">
    <location>
        <begin position="88"/>
        <end position="116"/>
    </location>
</feature>
<feature type="modified residue" description="Threonine amide" evidence="4">
    <location>
        <position position="116"/>
    </location>
</feature>
<feature type="disulfide bond" evidence="2">
    <location>
        <begin position="50"/>
        <end position="65"/>
    </location>
</feature>
<feature type="disulfide bond" evidence="2">
    <location>
        <begin position="57"/>
        <end position="74"/>
    </location>
</feature>
<feature type="disulfide bond" description="Interchain (between A and B chains)" evidence="2">
    <location>
        <begin position="64"/>
        <end position="95"/>
    </location>
</feature>
<feature type="disulfide bond" description="Interchain (between A and B chains)" evidence="2">
    <location>
        <begin position="76"/>
        <end position="93"/>
    </location>
</feature>
<protein>
    <recommendedName>
        <fullName evidence="5">Toxin CSTX-8</fullName>
    </recommendedName>
    <component>
        <recommendedName>
            <fullName evidence="5">CSTX-8 A chain</fullName>
        </recommendedName>
    </component>
    <component>
        <recommendedName>
            <fullName evidence="5">CSTX-8 B chain</fullName>
        </recommendedName>
    </component>
</protein>
<comment type="function">
    <text evidence="2">Synergistic toxin that induces or increases a cytolytic effect when combined with CSTX-1 (AC P81694) or CSTX-9 (AC P58604). When alone, has a weak insecticidal activity, with an unknown molecular target.</text>
</comment>
<comment type="subunit">
    <text evidence="2">Heterodimer of A and B chains; disulfide-linked (By similarity). Interacts with CSTX-1 (AC P81694), and with CSTX-9 (AC P58604) (By similarity).</text>
</comment>
<comment type="subcellular location">
    <subcellularLocation>
        <location evidence="4">Secreted</location>
    </subcellularLocation>
    <subcellularLocation>
        <location evidence="2">Target cell membrane</location>
    </subcellularLocation>
</comment>
<comment type="tissue specificity">
    <text evidence="6">Expressed by the venom gland.</text>
</comment>
<comment type="domain">
    <text evidence="1">The presence of a 'disulfide through disulfide knot' structurally defines this protein as a knottin.</text>
</comment>
<comment type="mass spectrometry" mass="4369.872" method="Electrospray" evidence="4">
    <molecule>CSTX-8 A chain</molecule>
</comment>
<comment type="mass spectrometry" mass="3475.802" method="Electrospray" evidence="4">
    <molecule>CSTX-8 B chain</molecule>
</comment>
<comment type="similarity">
    <text evidence="3">Belongs to the neurotoxin 19 (CSTX) family. 12 subfamily.</text>
</comment>
<keyword id="KW-0027">Amidation</keyword>
<keyword id="KW-0204">Cytolysis</keyword>
<keyword id="KW-0903">Direct protein sequencing</keyword>
<keyword id="KW-1015">Disulfide bond</keyword>
<keyword id="KW-0960">Knottin</keyword>
<keyword id="KW-0472">Membrane</keyword>
<keyword id="KW-0528">Neurotoxin</keyword>
<keyword id="KW-0964">Secreted</keyword>
<keyword id="KW-0732">Signal</keyword>
<keyword id="KW-1052">Target cell membrane</keyword>
<keyword id="KW-1053">Target membrane</keyword>
<keyword id="KW-0800">Toxin</keyword>
<sequence length="117" mass="13415">MKVLVICAVLFLAIFSNSSAETEDDFLEDESFQADDVIPFLASEQVRSDCTLRNHDCTDDRHSCCRSKMFKDVCKCFYPSQRSETDRAKKELCTCQQPKHLKYIEKGLQKAKDYATG</sequence>
<reference key="1">
    <citation type="journal article" date="2019" name="Toxins">
        <title>The dual prey-inactivation strategy of spiders-in-depth venomic analysis of Cupiennius salei.</title>
        <authorList>
            <person name="Kuhn-Nentwig L."/>
            <person name="Langenegger N."/>
            <person name="Heller M."/>
            <person name="Koua D."/>
            <person name="Nentwig W."/>
        </authorList>
    </citation>
    <scope>NUCLEOTIDE SEQUENCE [MRNA]</scope>
    <source>
        <tissue>Venom gland</tissue>
    </source>
</reference>
<reference key="2">
    <citation type="journal article" date="2012" name="FEBS J.">
        <title>Multicomponent venom of the spider Cupiennius salei: a bioanalytical investigation applying different strategies.</title>
        <authorList>
            <person name="Trachsel C."/>
            <person name="Siegemund D."/>
            <person name="Kampfer U."/>
            <person name="Kopp L.S."/>
            <person name="Buhr C."/>
            <person name="Grossmann J."/>
            <person name="Luthi C."/>
            <person name="Cunningham M."/>
            <person name="Nentwig W."/>
            <person name="Kuhn-Nentwig L."/>
            <person name="Schurch S."/>
            <person name="Schaller J."/>
        </authorList>
    </citation>
    <scope>PROTEIN SEQUENCE OF 48-81 AND 88-116</scope>
    <scope>MASS SPECTROMETRY</scope>
    <scope>AMIDATION AT THR-116</scope>
    <scope>SUBCELLULAR LOCATION</scope>
    <source>
        <tissue>Venom</tissue>
    </source>
</reference>